<accession>Q37685</accession>
<keyword id="KW-0186">Copper</keyword>
<keyword id="KW-0249">Electron transport</keyword>
<keyword id="KW-0460">Magnesium</keyword>
<keyword id="KW-0472">Membrane</keyword>
<keyword id="KW-0479">Metal-binding</keyword>
<keyword id="KW-0496">Mitochondrion</keyword>
<keyword id="KW-0999">Mitochondrion inner membrane</keyword>
<keyword id="KW-0679">Respiratory chain</keyword>
<keyword id="KW-1278">Translocase</keyword>
<keyword id="KW-0812">Transmembrane</keyword>
<keyword id="KW-1133">Transmembrane helix</keyword>
<keyword id="KW-0813">Transport</keyword>
<sequence length="227" mass="25953">MAYPMQLGFQDATSPIMEELLHFHDHTLMIVFLISSLVLYIISLMLTTKLTHTSTMDAQEVETVWTILPAVILIMIALPSLRILYMMDEINNPSLTVKTMGHQWYWSYEYTDYEDLSFDSYMIPTSELKPGELRLLEVDNRVVLPMEMTIRVLVSSEDVLHSWAVPSLGLKTDAIPGRLNQTTLMSSRPGLYYGQCSEICGSNHSFMPIVLELVPLKHFEKWSASML</sequence>
<feature type="chain" id="PRO_0000183705" description="Cytochrome c oxidase subunit 2">
    <location>
        <begin position="1"/>
        <end position="227"/>
    </location>
</feature>
<feature type="topological domain" description="Mitochondrial intermembrane" evidence="3">
    <location>
        <begin position="1"/>
        <end position="14"/>
    </location>
</feature>
<feature type="transmembrane region" description="Helical; Name=I" evidence="3">
    <location>
        <begin position="15"/>
        <end position="45"/>
    </location>
</feature>
<feature type="topological domain" description="Mitochondrial matrix" evidence="3">
    <location>
        <begin position="46"/>
        <end position="59"/>
    </location>
</feature>
<feature type="transmembrane region" description="Helical; Name=II" evidence="3">
    <location>
        <begin position="60"/>
        <end position="87"/>
    </location>
</feature>
<feature type="topological domain" description="Mitochondrial intermembrane" evidence="3">
    <location>
        <begin position="88"/>
        <end position="227"/>
    </location>
</feature>
<feature type="binding site" evidence="3">
    <location>
        <position position="161"/>
    </location>
    <ligand>
        <name>Cu cation</name>
        <dbReference type="ChEBI" id="CHEBI:23378"/>
        <label>A1</label>
    </ligand>
</feature>
<feature type="binding site" evidence="3">
    <location>
        <position position="196"/>
    </location>
    <ligand>
        <name>Cu cation</name>
        <dbReference type="ChEBI" id="CHEBI:23378"/>
        <label>A1</label>
    </ligand>
</feature>
<feature type="binding site" evidence="3">
    <location>
        <position position="196"/>
    </location>
    <ligand>
        <name>Cu cation</name>
        <dbReference type="ChEBI" id="CHEBI:23378"/>
        <label>A2</label>
    </ligand>
</feature>
<feature type="binding site" evidence="3">
    <location>
        <position position="198"/>
    </location>
    <ligand>
        <name>Cu cation</name>
        <dbReference type="ChEBI" id="CHEBI:23378"/>
        <label>A2</label>
    </ligand>
</feature>
<feature type="binding site" evidence="3">
    <location>
        <position position="198"/>
    </location>
    <ligand>
        <name>Mg(2+)</name>
        <dbReference type="ChEBI" id="CHEBI:18420"/>
        <note>ligand shared with MT-CO1</note>
    </ligand>
</feature>
<feature type="binding site" evidence="3">
    <location>
        <position position="200"/>
    </location>
    <ligand>
        <name>Cu cation</name>
        <dbReference type="ChEBI" id="CHEBI:23378"/>
        <label>A1</label>
    </ligand>
</feature>
<feature type="binding site" evidence="3">
    <location>
        <position position="200"/>
    </location>
    <ligand>
        <name>Cu cation</name>
        <dbReference type="ChEBI" id="CHEBI:23378"/>
        <label>A2</label>
    </ligand>
</feature>
<feature type="binding site" evidence="3">
    <location>
        <position position="204"/>
    </location>
    <ligand>
        <name>Cu cation</name>
        <dbReference type="ChEBI" id="CHEBI:23378"/>
        <label>A2</label>
    </ligand>
</feature>
<feature type="binding site" evidence="3">
    <location>
        <position position="207"/>
    </location>
    <ligand>
        <name>Cu cation</name>
        <dbReference type="ChEBI" id="CHEBI:23378"/>
        <label>A1</label>
    </ligand>
</feature>
<geneLocation type="mitochondrion"/>
<organism>
    <name type="scientific">Tragelaphus imberbis</name>
    <name type="common">Lesser kudu</name>
    <dbReference type="NCBI Taxonomy" id="9947"/>
    <lineage>
        <taxon>Eukaryota</taxon>
        <taxon>Metazoa</taxon>
        <taxon>Chordata</taxon>
        <taxon>Craniata</taxon>
        <taxon>Vertebrata</taxon>
        <taxon>Euteleostomi</taxon>
        <taxon>Mammalia</taxon>
        <taxon>Eutheria</taxon>
        <taxon>Laurasiatheria</taxon>
        <taxon>Artiodactyla</taxon>
        <taxon>Ruminantia</taxon>
        <taxon>Pecora</taxon>
        <taxon>Bovidae</taxon>
        <taxon>Bovinae</taxon>
        <taxon>Tragelaphus</taxon>
    </lineage>
</organism>
<proteinExistence type="inferred from homology"/>
<comment type="function">
    <text evidence="2">Component of the cytochrome c oxidase, the last enzyme in the mitochondrial electron transport chain which drives oxidative phosphorylation. The respiratory chain contains 3 multisubunit complexes succinate dehydrogenase (complex II, CII), ubiquinol-cytochrome c oxidoreductase (cytochrome b-c1 complex, complex III, CIII) and cytochrome c oxidase (complex IV, CIV), that cooperate to transfer electrons derived from NADH and succinate to molecular oxygen, creating an electrochemical gradient over the inner membrane that drives transmembrane transport and the ATP synthase. Cytochrome c oxidase is the component of the respiratory chain that catalyzes the reduction of oxygen to water. Electrons originating from reduced cytochrome c in the intermembrane space (IMS) are transferred via the dinuclear copper A center (CU(A)) of subunit 2 and heme A of subunit 1 to the active site in subunit 1, a binuclear center (BNC) formed by heme A3 and copper B (CU(B)). The BNC reduces molecular oxygen to 2 water molecules using 4 electrons from cytochrome c in the IMS and 4 protons from the mitochondrial matrix.</text>
</comment>
<comment type="catalytic activity">
    <reaction evidence="2">
        <text>4 Fe(II)-[cytochrome c] + O2 + 8 H(+)(in) = 4 Fe(III)-[cytochrome c] + 2 H2O + 4 H(+)(out)</text>
        <dbReference type="Rhea" id="RHEA:11436"/>
        <dbReference type="Rhea" id="RHEA-COMP:10350"/>
        <dbReference type="Rhea" id="RHEA-COMP:14399"/>
        <dbReference type="ChEBI" id="CHEBI:15377"/>
        <dbReference type="ChEBI" id="CHEBI:15378"/>
        <dbReference type="ChEBI" id="CHEBI:15379"/>
        <dbReference type="ChEBI" id="CHEBI:29033"/>
        <dbReference type="ChEBI" id="CHEBI:29034"/>
        <dbReference type="EC" id="7.1.1.9"/>
    </reaction>
    <physiologicalReaction direction="left-to-right" evidence="2">
        <dbReference type="Rhea" id="RHEA:11437"/>
    </physiologicalReaction>
</comment>
<comment type="cofactor">
    <cofactor evidence="3">
        <name>Cu cation</name>
        <dbReference type="ChEBI" id="CHEBI:23378"/>
    </cofactor>
    <text evidence="3">Binds a dinuclear copper A center per subunit.</text>
</comment>
<comment type="subunit">
    <text evidence="1 3">Component of the cytochrome c oxidase (complex IV, CIV), a multisubunit enzyme composed of 14 subunits. The complex is composed of a catalytic core of 3 subunits MT-CO1, MT-CO2 and MT-CO3, encoded in the mitochondrial DNA, and 11 supernumerary subunits COX4I, COX5A, COX5B, COX6A, COX6B, COX6C, COX7A, COX7B, COX7C, COX8 and NDUFA4, which are encoded in the nuclear genome. The complex exists as a monomer or a dimer and forms supercomplexes (SCs) in the inner mitochondrial membrane with NADH-ubiquinone oxidoreductase (complex I, CI) and ubiquinol-cytochrome c oxidoreductase (cytochrome b-c1 complex, complex III, CIII), resulting in different assemblies (supercomplex SCI(1)III(2)IV(1) and megacomplex MCI(2)III(2)IV(2)) (By similarity). Found in a complex with TMEM177, COA6, COX18, COX20, SCO1 and SCO2. Interacts with TMEM177 in a COX20-dependent manner. Interacts with COX20. Interacts with COX16 (By similarity).</text>
</comment>
<comment type="subcellular location">
    <subcellularLocation>
        <location evidence="3">Mitochondrion inner membrane</location>
        <topology evidence="3">Multi-pass membrane protein</topology>
    </subcellularLocation>
</comment>
<comment type="similarity">
    <text evidence="4">Belongs to the cytochrome c oxidase subunit 2 family.</text>
</comment>
<protein>
    <recommendedName>
        <fullName>Cytochrome c oxidase subunit 2</fullName>
        <ecNumber>7.1.1.9</ecNumber>
    </recommendedName>
    <alternativeName>
        <fullName>Cytochrome c oxidase polypeptide II</fullName>
    </alternativeName>
</protein>
<name>COX2_TRAIM</name>
<dbReference type="EC" id="7.1.1.9"/>
<dbReference type="EMBL" id="U18815">
    <property type="protein sequence ID" value="AAA74567.1"/>
    <property type="molecule type" value="Genomic_DNA"/>
</dbReference>
<dbReference type="RefSeq" id="YP_007625006.1">
    <property type="nucleotide sequence ID" value="NC_020619.1"/>
</dbReference>
<dbReference type="SMR" id="Q37685"/>
<dbReference type="GeneID" id="14841548"/>
<dbReference type="CTD" id="4513"/>
<dbReference type="GO" id="GO:0005743">
    <property type="term" value="C:mitochondrial inner membrane"/>
    <property type="evidence" value="ECO:0007669"/>
    <property type="project" value="UniProtKB-SubCell"/>
</dbReference>
<dbReference type="GO" id="GO:0045277">
    <property type="term" value="C:respiratory chain complex IV"/>
    <property type="evidence" value="ECO:0000250"/>
    <property type="project" value="UniProtKB"/>
</dbReference>
<dbReference type="GO" id="GO:0005507">
    <property type="term" value="F:copper ion binding"/>
    <property type="evidence" value="ECO:0007669"/>
    <property type="project" value="InterPro"/>
</dbReference>
<dbReference type="GO" id="GO:0004129">
    <property type="term" value="F:cytochrome-c oxidase activity"/>
    <property type="evidence" value="ECO:0007669"/>
    <property type="project" value="UniProtKB-EC"/>
</dbReference>
<dbReference type="GO" id="GO:0042773">
    <property type="term" value="P:ATP synthesis coupled electron transport"/>
    <property type="evidence" value="ECO:0007669"/>
    <property type="project" value="TreeGrafter"/>
</dbReference>
<dbReference type="CDD" id="cd13912">
    <property type="entry name" value="CcO_II_C"/>
    <property type="match status" value="1"/>
</dbReference>
<dbReference type="FunFam" id="1.10.287.90:FF:000001">
    <property type="entry name" value="Cytochrome c oxidase subunit 2"/>
    <property type="match status" value="1"/>
</dbReference>
<dbReference type="FunFam" id="2.60.40.420:FF:000001">
    <property type="entry name" value="Cytochrome c oxidase subunit 2"/>
    <property type="match status" value="1"/>
</dbReference>
<dbReference type="Gene3D" id="1.10.287.90">
    <property type="match status" value="1"/>
</dbReference>
<dbReference type="Gene3D" id="2.60.40.420">
    <property type="entry name" value="Cupredoxins - blue copper proteins"/>
    <property type="match status" value="1"/>
</dbReference>
<dbReference type="InterPro" id="IPR045187">
    <property type="entry name" value="CcO_II"/>
</dbReference>
<dbReference type="InterPro" id="IPR002429">
    <property type="entry name" value="CcO_II-like_C"/>
</dbReference>
<dbReference type="InterPro" id="IPR034210">
    <property type="entry name" value="CcO_II_C"/>
</dbReference>
<dbReference type="InterPro" id="IPR001505">
    <property type="entry name" value="Copper_CuA"/>
</dbReference>
<dbReference type="InterPro" id="IPR008972">
    <property type="entry name" value="Cupredoxin"/>
</dbReference>
<dbReference type="InterPro" id="IPR014222">
    <property type="entry name" value="Cyt_c_oxidase_su2"/>
</dbReference>
<dbReference type="InterPro" id="IPR011759">
    <property type="entry name" value="Cyt_c_oxidase_su2_TM_dom"/>
</dbReference>
<dbReference type="InterPro" id="IPR036257">
    <property type="entry name" value="Cyt_c_oxidase_su2_TM_sf"/>
</dbReference>
<dbReference type="NCBIfam" id="TIGR02866">
    <property type="entry name" value="CoxB"/>
    <property type="match status" value="1"/>
</dbReference>
<dbReference type="PANTHER" id="PTHR22888:SF9">
    <property type="entry name" value="CYTOCHROME C OXIDASE SUBUNIT 2"/>
    <property type="match status" value="1"/>
</dbReference>
<dbReference type="PANTHER" id="PTHR22888">
    <property type="entry name" value="CYTOCHROME C OXIDASE, SUBUNIT II"/>
    <property type="match status" value="1"/>
</dbReference>
<dbReference type="Pfam" id="PF00116">
    <property type="entry name" value="COX2"/>
    <property type="match status" value="1"/>
</dbReference>
<dbReference type="Pfam" id="PF02790">
    <property type="entry name" value="COX2_TM"/>
    <property type="match status" value="1"/>
</dbReference>
<dbReference type="PRINTS" id="PR01166">
    <property type="entry name" value="CYCOXIDASEII"/>
</dbReference>
<dbReference type="SUPFAM" id="SSF49503">
    <property type="entry name" value="Cupredoxins"/>
    <property type="match status" value="1"/>
</dbReference>
<dbReference type="SUPFAM" id="SSF81464">
    <property type="entry name" value="Cytochrome c oxidase subunit II-like, transmembrane region"/>
    <property type="match status" value="1"/>
</dbReference>
<dbReference type="PROSITE" id="PS00078">
    <property type="entry name" value="COX2"/>
    <property type="match status" value="1"/>
</dbReference>
<dbReference type="PROSITE" id="PS50857">
    <property type="entry name" value="COX2_CUA"/>
    <property type="match status" value="1"/>
</dbReference>
<dbReference type="PROSITE" id="PS50999">
    <property type="entry name" value="COX2_TM"/>
    <property type="match status" value="1"/>
</dbReference>
<reference key="1">
    <citation type="journal article" date="1995" name="J. Mol. Evol.">
        <title>Mammalian mitochondrial DNA evolution: a comparison of the cytochrome b and cytochrome c oxidase II genes.</title>
        <authorList>
            <person name="Honeycutt R.L."/>
            <person name="Nedbal M.A."/>
            <person name="Adkins R.M."/>
            <person name="Janecek L.L."/>
        </authorList>
    </citation>
    <scope>NUCLEOTIDE SEQUENCE [GENOMIC DNA]</scope>
</reference>
<gene>
    <name type="primary">MT-CO2</name>
    <name type="synonym">COII</name>
    <name type="synonym">COX2</name>
    <name type="synonym">COXII</name>
    <name type="synonym">MTCO2</name>
</gene>
<evidence type="ECO:0000250" key="1">
    <source>
        <dbReference type="UniProtKB" id="P00403"/>
    </source>
</evidence>
<evidence type="ECO:0000250" key="2">
    <source>
        <dbReference type="UniProtKB" id="P00410"/>
    </source>
</evidence>
<evidence type="ECO:0000250" key="3">
    <source>
        <dbReference type="UniProtKB" id="P68530"/>
    </source>
</evidence>
<evidence type="ECO:0000305" key="4"/>